<feature type="initiator methionine" description="Removed; by host" evidence="1">
    <location>
        <position position="1"/>
    </location>
</feature>
<feature type="chain" id="PRO_0000144947" description="Capsid protein">
    <location>
        <begin position="2"/>
        <end position="159"/>
    </location>
</feature>
<feature type="sequence conflict" description="In Ref. 2; AAD19282." evidence="2" ref="2">
    <original>V</original>
    <variation>L</variation>
    <location>
        <position position="115"/>
    </location>
</feature>
<organism>
    <name type="scientific">Tomato mosaic virus (strain Kazakh K1)</name>
    <name type="common">ToMV</name>
    <name type="synonym">TMV strain K1</name>
    <dbReference type="NCBI Taxonomy" id="138311"/>
    <lineage>
        <taxon>Viruses</taxon>
        <taxon>Riboviria</taxon>
        <taxon>Orthornavirae</taxon>
        <taxon>Kitrinoviricota</taxon>
        <taxon>Alsuviricetes</taxon>
        <taxon>Martellivirales</taxon>
        <taxon>Virgaviridae</taxon>
        <taxon>Tobamovirus</taxon>
        <taxon>Tomato mosaic virus</taxon>
    </lineage>
</organism>
<proteinExistence type="evidence at protein level"/>
<gene>
    <name type="primary">CP</name>
</gene>
<protein>
    <recommendedName>
        <fullName>Capsid protein</fullName>
    </recommendedName>
    <alternativeName>
        <fullName>Coat protein</fullName>
    </alternativeName>
</protein>
<sequence>MSYPITSPSQFVFLSSVWADPIELLNVCTNSLGNQFQTQQARTTVQQQFSEVWEPFPQSTVRFPGDVYKVYRYNAVLDPLITALLGTFDTRNRIIEVENRQSPTTAETLDATRRVDDATVAIRSAINNLVNELVRGTGLYNQNTFESMSGLVWTSAPAS</sequence>
<dbReference type="EMBL" id="AJ243571">
    <property type="protein sequence ID" value="CAB62914.1"/>
    <property type="molecule type" value="Genomic_RNA"/>
</dbReference>
<dbReference type="EMBL" id="AF062519">
    <property type="protein sequence ID" value="AAD19282.1"/>
    <property type="molecule type" value="Genomic_RNA"/>
</dbReference>
<dbReference type="SMR" id="Q9Q1T6"/>
<dbReference type="Proteomes" id="UP000008252">
    <property type="component" value="Genome"/>
</dbReference>
<dbReference type="GO" id="GO:0019029">
    <property type="term" value="C:helical viral capsid"/>
    <property type="evidence" value="ECO:0007669"/>
    <property type="project" value="UniProtKB-KW"/>
</dbReference>
<dbReference type="GO" id="GO:0005198">
    <property type="term" value="F:structural molecule activity"/>
    <property type="evidence" value="ECO:0007669"/>
    <property type="project" value="InterPro"/>
</dbReference>
<dbReference type="Gene3D" id="1.20.120.70">
    <property type="entry name" value="Tobacco mosaic virus-like, coat protein"/>
    <property type="match status" value="1"/>
</dbReference>
<dbReference type="InterPro" id="IPR001337">
    <property type="entry name" value="TMV-like_coat"/>
</dbReference>
<dbReference type="InterPro" id="IPR036417">
    <property type="entry name" value="TMV-like_coat_sf"/>
</dbReference>
<dbReference type="Pfam" id="PF00721">
    <property type="entry name" value="TMV_coat"/>
    <property type="match status" value="1"/>
</dbReference>
<dbReference type="SUPFAM" id="SSF47195">
    <property type="entry name" value="TMV-like viral coat proteins"/>
    <property type="match status" value="1"/>
</dbReference>
<accession>Q9Q1T6</accession>
<accession>Q9YLQ8</accession>
<evidence type="ECO:0000250" key="1"/>
<evidence type="ECO:0000305" key="2"/>
<organismHost>
    <name type="scientific">Antirrhinum majus</name>
    <name type="common">Garden snapdragon</name>
    <dbReference type="NCBI Taxonomy" id="4151"/>
</organismHost>
<organismHost>
    <name type="scientific">Capsicum</name>
    <name type="common">peppers</name>
    <dbReference type="NCBI Taxonomy" id="4071"/>
</organismHost>
<organismHost>
    <name type="scientific">Delphinium</name>
    <dbReference type="NCBI Taxonomy" id="46246"/>
</organismHost>
<organismHost>
    <name type="scientific">Petunia</name>
    <dbReference type="NCBI Taxonomy" id="4101"/>
</organismHost>
<organismHost>
    <name type="scientific">Solanum lycopersicum</name>
    <name type="common">Tomato</name>
    <name type="synonym">Lycopersicon esculentum</name>
    <dbReference type="NCBI Taxonomy" id="4081"/>
</organismHost>
<organismHost>
    <name type="scientific">Tagetes</name>
    <name type="common">marigolds</name>
    <dbReference type="NCBI Taxonomy" id="13707"/>
</organismHost>
<keyword id="KW-0167">Capsid protein</keyword>
<keyword id="KW-1139">Helical capsid protein</keyword>
<keyword id="KW-0946">Virion</keyword>
<name>CAPSD_TOMK1</name>
<reference key="1">
    <citation type="journal article" date="2000" name="Mol. Biol. (Mosk.)">
        <title>Biological properties and genome structure of the Kazakh isolate K1 of Tobacco Mosaic virus.</title>
        <authorList>
            <person name="Belenovich E.V."/>
            <person name="Novikov V.K."/>
            <person name="Zavriev S.K."/>
        </authorList>
    </citation>
    <scope>NUCLEOTIDE SEQUENCE [GENOMIC RNA]</scope>
</reference>
<reference key="2">
    <citation type="submission" date="1998-05" db="EMBL/GenBank/DDBJ databases">
        <title>Kazakh isolates of tomato mosaic virus: possible connections of point mutations in the coat protein gene with symptom formation.</title>
        <authorList>
            <person name="Belenovich E.V."/>
            <person name="Novikov V.K."/>
            <person name="Zavriev S.K."/>
        </authorList>
    </citation>
    <scope>NUCLEOTIDE SEQUENCE [GENOMIC RNA]</scope>
</reference>
<reference key="3">
    <citation type="journal article" date="2000" name="Mol. Biol. (Mosk.)">
        <title>Properties of envelope protein of the K1 Kazakh strain of tobacco mosaic virus.</title>
        <authorList>
            <person name="Novikov V.K."/>
            <person name="Dobrov E.N."/>
            <person name="Belenovich E.V."/>
            <person name="Zavriev S.K."/>
        </authorList>
    </citation>
    <scope>CHARACTERIZATION</scope>
</reference>
<comment type="function">
    <text>Capsid protein self-assembles to form rod-shaped virions about 18 nm in diameter with a central canal enclosing the viral genomic RNA.</text>
</comment>
<comment type="subcellular location">
    <subcellularLocation>
        <location evidence="2">Virion</location>
    </subcellularLocation>
</comment>
<comment type="similarity">
    <text evidence="2">Belongs to the virgaviridae capsid protein family.</text>
</comment>